<reference key="1">
    <citation type="journal article" date="1997" name="Microbiology">
        <title>Sequencing and functional annotation of the Bacillus subtilis genes in the 200 kb rrnB-dnaB region.</title>
        <authorList>
            <person name="Lapidus A."/>
            <person name="Galleron N."/>
            <person name="Sorokin A."/>
            <person name="Ehrlich S.D."/>
        </authorList>
    </citation>
    <scope>NUCLEOTIDE SEQUENCE [GENOMIC DNA]</scope>
    <source>
        <strain>168</strain>
    </source>
</reference>
<reference key="2">
    <citation type="journal article" date="1997" name="Nature">
        <title>The complete genome sequence of the Gram-positive bacterium Bacillus subtilis.</title>
        <authorList>
            <person name="Kunst F."/>
            <person name="Ogasawara N."/>
            <person name="Moszer I."/>
            <person name="Albertini A.M."/>
            <person name="Alloni G."/>
            <person name="Azevedo V."/>
            <person name="Bertero M.G."/>
            <person name="Bessieres P."/>
            <person name="Bolotin A."/>
            <person name="Borchert S."/>
            <person name="Borriss R."/>
            <person name="Boursier L."/>
            <person name="Brans A."/>
            <person name="Braun M."/>
            <person name="Brignell S.C."/>
            <person name="Bron S."/>
            <person name="Brouillet S."/>
            <person name="Bruschi C.V."/>
            <person name="Caldwell B."/>
            <person name="Capuano V."/>
            <person name="Carter N.M."/>
            <person name="Choi S.-K."/>
            <person name="Codani J.-J."/>
            <person name="Connerton I.F."/>
            <person name="Cummings N.J."/>
            <person name="Daniel R.A."/>
            <person name="Denizot F."/>
            <person name="Devine K.M."/>
            <person name="Duesterhoeft A."/>
            <person name="Ehrlich S.D."/>
            <person name="Emmerson P.T."/>
            <person name="Entian K.-D."/>
            <person name="Errington J."/>
            <person name="Fabret C."/>
            <person name="Ferrari E."/>
            <person name="Foulger D."/>
            <person name="Fritz C."/>
            <person name="Fujita M."/>
            <person name="Fujita Y."/>
            <person name="Fuma S."/>
            <person name="Galizzi A."/>
            <person name="Galleron N."/>
            <person name="Ghim S.-Y."/>
            <person name="Glaser P."/>
            <person name="Goffeau A."/>
            <person name="Golightly E.J."/>
            <person name="Grandi G."/>
            <person name="Guiseppi G."/>
            <person name="Guy B.J."/>
            <person name="Haga K."/>
            <person name="Haiech J."/>
            <person name="Harwood C.R."/>
            <person name="Henaut A."/>
            <person name="Hilbert H."/>
            <person name="Holsappel S."/>
            <person name="Hosono S."/>
            <person name="Hullo M.-F."/>
            <person name="Itaya M."/>
            <person name="Jones L.-M."/>
            <person name="Joris B."/>
            <person name="Karamata D."/>
            <person name="Kasahara Y."/>
            <person name="Klaerr-Blanchard M."/>
            <person name="Klein C."/>
            <person name="Kobayashi Y."/>
            <person name="Koetter P."/>
            <person name="Koningstein G."/>
            <person name="Krogh S."/>
            <person name="Kumano M."/>
            <person name="Kurita K."/>
            <person name="Lapidus A."/>
            <person name="Lardinois S."/>
            <person name="Lauber J."/>
            <person name="Lazarevic V."/>
            <person name="Lee S.-M."/>
            <person name="Levine A."/>
            <person name="Liu H."/>
            <person name="Masuda S."/>
            <person name="Mauel C."/>
            <person name="Medigue C."/>
            <person name="Medina N."/>
            <person name="Mellado R.P."/>
            <person name="Mizuno M."/>
            <person name="Moestl D."/>
            <person name="Nakai S."/>
            <person name="Noback M."/>
            <person name="Noone D."/>
            <person name="O'Reilly M."/>
            <person name="Ogawa K."/>
            <person name="Ogiwara A."/>
            <person name="Oudega B."/>
            <person name="Park S.-H."/>
            <person name="Parro V."/>
            <person name="Pohl T.M."/>
            <person name="Portetelle D."/>
            <person name="Porwollik S."/>
            <person name="Prescott A.M."/>
            <person name="Presecan E."/>
            <person name="Pujic P."/>
            <person name="Purnelle B."/>
            <person name="Rapoport G."/>
            <person name="Rey M."/>
            <person name="Reynolds S."/>
            <person name="Rieger M."/>
            <person name="Rivolta C."/>
            <person name="Rocha E."/>
            <person name="Roche B."/>
            <person name="Rose M."/>
            <person name="Sadaie Y."/>
            <person name="Sato T."/>
            <person name="Scanlan E."/>
            <person name="Schleich S."/>
            <person name="Schroeter R."/>
            <person name="Scoffone F."/>
            <person name="Sekiguchi J."/>
            <person name="Sekowska A."/>
            <person name="Seror S.J."/>
            <person name="Serror P."/>
            <person name="Shin B.-S."/>
            <person name="Soldo B."/>
            <person name="Sorokin A."/>
            <person name="Tacconi E."/>
            <person name="Takagi T."/>
            <person name="Takahashi H."/>
            <person name="Takemaru K."/>
            <person name="Takeuchi M."/>
            <person name="Tamakoshi A."/>
            <person name="Tanaka T."/>
            <person name="Terpstra P."/>
            <person name="Tognoni A."/>
            <person name="Tosato V."/>
            <person name="Uchiyama S."/>
            <person name="Vandenbol M."/>
            <person name="Vannier F."/>
            <person name="Vassarotti A."/>
            <person name="Viari A."/>
            <person name="Wambutt R."/>
            <person name="Wedler E."/>
            <person name="Wedler H."/>
            <person name="Weitzenegger T."/>
            <person name="Winters P."/>
            <person name="Wipat A."/>
            <person name="Yamamoto H."/>
            <person name="Yamane K."/>
            <person name="Yasumoto K."/>
            <person name="Yata K."/>
            <person name="Yoshida K."/>
            <person name="Yoshikawa H.-F."/>
            <person name="Zumstein E."/>
            <person name="Yoshikawa H."/>
            <person name="Danchin A."/>
        </authorList>
    </citation>
    <scope>NUCLEOTIDE SEQUENCE [LARGE SCALE GENOMIC DNA]</scope>
    <source>
        <strain>168</strain>
    </source>
</reference>
<reference key="3">
    <citation type="journal article" date="2019" name="J. Bacteriol.">
        <title>The melREDCA operon encodes a utilization system for the raffinose family of oligosaccharides in Bacillus subtilis.</title>
        <authorList>
            <person name="Morabbi Heravi K."/>
            <person name="Watzlawick H."/>
            <person name="Altenbuchner J."/>
        </authorList>
    </citation>
    <scope>FUNCTION</scope>
    <scope>SUBUNIT</scope>
    <scope>SUBCELLULAR LOCATION</scope>
    <scope>INDUCTION</scope>
    <scope>DISRUPTION PHENOTYPE</scope>
    <source>
        <strain>168 / KM0</strain>
    </source>
</reference>
<sequence>MRAARTKSMRIITLLAAIVACAHFIPFYILLTTSLKAKGDYSSKWIFPADISFHNFSEAWERASLGNSFINTMIITGFSALLLIIFGSLAAYPLARRETKLNKAVFALLISIMIIPPLTSMVPLYRMVVDAGMVNTHAIAIFINTAAYMPLTVFLYSGFIRSTIPKELVEAARIDGAGMLKIFFTIVFPLLKPITATICIISCVFIWNDYQFAIFFLQDQKVQTLTVAMAGFFGENANNLHLVAAAALMAMLPMVVLFLALQKYFIAGLSSGAVKG</sequence>
<keyword id="KW-1003">Cell membrane</keyword>
<keyword id="KW-0472">Membrane</keyword>
<keyword id="KW-0625">Polysaccharide transport</keyword>
<keyword id="KW-1185">Reference proteome</keyword>
<keyword id="KW-0762">Sugar transport</keyword>
<keyword id="KW-0812">Transmembrane</keyword>
<keyword id="KW-1133">Transmembrane helix</keyword>
<keyword id="KW-0813">Transport</keyword>
<organism>
    <name type="scientific">Bacillus subtilis (strain 168)</name>
    <dbReference type="NCBI Taxonomy" id="224308"/>
    <lineage>
        <taxon>Bacteria</taxon>
        <taxon>Bacillati</taxon>
        <taxon>Bacillota</taxon>
        <taxon>Bacilli</taxon>
        <taxon>Bacillales</taxon>
        <taxon>Bacillaceae</taxon>
        <taxon>Bacillus</taxon>
    </lineage>
</organism>
<evidence type="ECO:0000255" key="1">
    <source>
        <dbReference type="PROSITE-ProRule" id="PRU00441"/>
    </source>
</evidence>
<evidence type="ECO:0000269" key="2">
    <source>
    </source>
</evidence>
<evidence type="ECO:0000303" key="3">
    <source>
    </source>
</evidence>
<evidence type="ECO:0000305" key="4"/>
<evidence type="ECO:0000305" key="5">
    <source>
    </source>
</evidence>
<dbReference type="EMBL" id="AF008220">
    <property type="protein sequence ID" value="AAC00384.1"/>
    <property type="molecule type" value="Genomic_DNA"/>
</dbReference>
<dbReference type="EMBL" id="AL009126">
    <property type="protein sequence ID" value="CAB15007.1"/>
    <property type="molecule type" value="Genomic_DNA"/>
</dbReference>
<dbReference type="PIR" id="D69585">
    <property type="entry name" value="D69585"/>
</dbReference>
<dbReference type="RefSeq" id="WP_004398630.1">
    <property type="nucleotide sequence ID" value="NZ_OZ025638.1"/>
</dbReference>
<dbReference type="SMR" id="O34518"/>
<dbReference type="FunCoup" id="O34518">
    <property type="interactions" value="158"/>
</dbReference>
<dbReference type="STRING" id="224308.BSU30290"/>
<dbReference type="PaxDb" id="224308-BSU30290"/>
<dbReference type="EnsemblBacteria" id="CAB15007">
    <property type="protein sequence ID" value="CAB15007"/>
    <property type="gene ID" value="BSU_30290"/>
</dbReference>
<dbReference type="GeneID" id="935927"/>
<dbReference type="KEGG" id="bsu:BSU30290"/>
<dbReference type="PATRIC" id="fig|224308.179.peg.3285"/>
<dbReference type="eggNOG" id="COG0395">
    <property type="taxonomic scope" value="Bacteria"/>
</dbReference>
<dbReference type="InParanoid" id="O34518"/>
<dbReference type="OrthoDB" id="9772609at2"/>
<dbReference type="PhylomeDB" id="O34518"/>
<dbReference type="BioCyc" id="BSUB:BSU30290-MONOMER"/>
<dbReference type="Proteomes" id="UP000001570">
    <property type="component" value="Chromosome"/>
</dbReference>
<dbReference type="GO" id="GO:0005886">
    <property type="term" value="C:plasma membrane"/>
    <property type="evidence" value="ECO:0007669"/>
    <property type="project" value="UniProtKB-SubCell"/>
</dbReference>
<dbReference type="GO" id="GO:0015774">
    <property type="term" value="P:polysaccharide transport"/>
    <property type="evidence" value="ECO:0007669"/>
    <property type="project" value="UniProtKB-KW"/>
</dbReference>
<dbReference type="GO" id="GO:0055085">
    <property type="term" value="P:transmembrane transport"/>
    <property type="evidence" value="ECO:0007669"/>
    <property type="project" value="InterPro"/>
</dbReference>
<dbReference type="CDD" id="cd06261">
    <property type="entry name" value="TM_PBP2"/>
    <property type="match status" value="1"/>
</dbReference>
<dbReference type="Gene3D" id="1.10.3720.10">
    <property type="entry name" value="MetI-like"/>
    <property type="match status" value="1"/>
</dbReference>
<dbReference type="InterPro" id="IPR000515">
    <property type="entry name" value="MetI-like"/>
</dbReference>
<dbReference type="InterPro" id="IPR035906">
    <property type="entry name" value="MetI-like_sf"/>
</dbReference>
<dbReference type="PANTHER" id="PTHR43744:SF12">
    <property type="entry name" value="ABC TRANSPORTER PERMEASE PROTEIN MG189-RELATED"/>
    <property type="match status" value="1"/>
</dbReference>
<dbReference type="PANTHER" id="PTHR43744">
    <property type="entry name" value="ABC TRANSPORTER PERMEASE PROTEIN MG189-RELATED-RELATED"/>
    <property type="match status" value="1"/>
</dbReference>
<dbReference type="Pfam" id="PF00528">
    <property type="entry name" value="BPD_transp_1"/>
    <property type="match status" value="1"/>
</dbReference>
<dbReference type="SUPFAM" id="SSF161098">
    <property type="entry name" value="MetI-like"/>
    <property type="match status" value="1"/>
</dbReference>
<dbReference type="PROSITE" id="PS50928">
    <property type="entry name" value="ABC_TM1"/>
    <property type="match status" value="1"/>
</dbReference>
<gene>
    <name evidence="3" type="primary">melC</name>
    <name type="synonym">amyC</name>
    <name type="ordered locus">BSU30290</name>
</gene>
<feature type="chain" id="PRO_0000387964" description="Melibiose/raffinose/stachyose import permease protein MelC">
    <location>
        <begin position="1"/>
        <end position="276"/>
    </location>
</feature>
<feature type="transmembrane region" description="Helical" evidence="1">
    <location>
        <begin position="11"/>
        <end position="31"/>
    </location>
</feature>
<feature type="transmembrane region" description="Helical" evidence="1">
    <location>
        <begin position="74"/>
        <end position="94"/>
    </location>
</feature>
<feature type="transmembrane region" description="Helical" evidence="1">
    <location>
        <begin position="104"/>
        <end position="124"/>
    </location>
</feature>
<feature type="transmembrane region" description="Helical" evidence="1">
    <location>
        <begin position="139"/>
        <end position="159"/>
    </location>
</feature>
<feature type="transmembrane region" description="Helical" evidence="1">
    <location>
        <begin position="186"/>
        <end position="206"/>
    </location>
</feature>
<feature type="transmembrane region" description="Helical" evidence="1">
    <location>
        <begin position="240"/>
        <end position="260"/>
    </location>
</feature>
<feature type="domain" description="ABC transmembrane type-1" evidence="1">
    <location>
        <begin position="69"/>
        <end position="261"/>
    </location>
</feature>
<proteinExistence type="evidence at protein level"/>
<comment type="function">
    <text evidence="2">Part of the ABC transporter complex MelEDC-MsmX involved in melibiose, raffinose and stachyose import. Probably responsible for the translocation of the substrate across the membrane.</text>
</comment>
<comment type="subunit">
    <text evidence="2">The complex is composed of two ATP-binding proteins (MsmX), two transmembrane proteins (MelC and MelD) and a solute-binding protein (MelE).</text>
</comment>
<comment type="subcellular location">
    <subcellularLocation>
        <location evidence="5">Cell membrane</location>
        <topology evidence="1">Multi-pass membrane protein</topology>
    </subcellularLocation>
</comment>
<comment type="induction">
    <text evidence="2">Repressed by the transcriptional regulator MelR. Induced by melibiose and raffinose.</text>
</comment>
<comment type="disruption phenotype">
    <text evidence="2">Deletion of the gene abolishes induction in the presence of melibiose and raffinose.</text>
</comment>
<comment type="similarity">
    <text evidence="4">Belongs to the binding-protein-dependent transport system permease family.</text>
</comment>
<name>MELC_BACSU</name>
<protein>
    <recommendedName>
        <fullName evidence="4">Melibiose/raffinose/stachyose import permease protein MelC</fullName>
    </recommendedName>
</protein>
<accession>O34518</accession>
<accession>Q795Q7</accession>